<gene>
    <name evidence="1" type="primary">chlN</name>
</gene>
<feature type="chain" id="PRO_0000208609" description="Light-independent protochlorophyllide reductase subunit N">
    <location>
        <begin position="1"/>
        <end position="435"/>
    </location>
</feature>
<feature type="binding site" evidence="1">
    <location>
        <position position="23"/>
    </location>
    <ligand>
        <name>[4Fe-4S] cluster</name>
        <dbReference type="ChEBI" id="CHEBI:49883"/>
        <note>ligand shared with heterodimeric partner</note>
    </ligand>
</feature>
<feature type="binding site" evidence="1">
    <location>
        <position position="48"/>
    </location>
    <ligand>
        <name>[4Fe-4S] cluster</name>
        <dbReference type="ChEBI" id="CHEBI:49883"/>
        <note>ligand shared with heterodimeric partner</note>
    </ligand>
</feature>
<feature type="binding site" evidence="1">
    <location>
        <position position="108"/>
    </location>
    <ligand>
        <name>[4Fe-4S] cluster</name>
        <dbReference type="ChEBI" id="CHEBI:49883"/>
        <note>ligand shared with heterodimeric partner</note>
    </ligand>
</feature>
<proteinExistence type="inferred from homology"/>
<accession>Q7YKW4</accession>
<name>CHLN_AUXPR</name>
<organism>
    <name type="scientific">Auxenochlorella protothecoides</name>
    <name type="common">Green microalga</name>
    <name type="synonym">Chlorella protothecoides</name>
    <dbReference type="NCBI Taxonomy" id="3075"/>
    <lineage>
        <taxon>Eukaryota</taxon>
        <taxon>Viridiplantae</taxon>
        <taxon>Chlorophyta</taxon>
        <taxon>core chlorophytes</taxon>
        <taxon>Trebouxiophyceae</taxon>
        <taxon>Chlorellales</taxon>
        <taxon>Chlorellaceae</taxon>
        <taxon>Auxenochlorella</taxon>
    </lineage>
</organism>
<dbReference type="EC" id="1.3.7.7" evidence="1"/>
<dbReference type="EMBL" id="AY331982">
    <property type="protein sequence ID" value="AAP93906.1"/>
    <property type="molecule type" value="Genomic_DNA"/>
</dbReference>
<dbReference type="SMR" id="Q7YKW4"/>
<dbReference type="BRENDA" id="1.3.7.7">
    <property type="organism ID" value="1329"/>
</dbReference>
<dbReference type="UniPathway" id="UPA00670"/>
<dbReference type="GO" id="GO:0009507">
    <property type="term" value="C:chloroplast"/>
    <property type="evidence" value="ECO:0007669"/>
    <property type="project" value="UniProtKB-SubCell"/>
</dbReference>
<dbReference type="GO" id="GO:0051539">
    <property type="term" value="F:4 iron, 4 sulfur cluster binding"/>
    <property type="evidence" value="ECO:0007669"/>
    <property type="project" value="UniProtKB-UniRule"/>
</dbReference>
<dbReference type="GO" id="GO:0005524">
    <property type="term" value="F:ATP binding"/>
    <property type="evidence" value="ECO:0007669"/>
    <property type="project" value="UniProtKB-UniRule"/>
</dbReference>
<dbReference type="GO" id="GO:0046872">
    <property type="term" value="F:metal ion binding"/>
    <property type="evidence" value="ECO:0007669"/>
    <property type="project" value="UniProtKB-KW"/>
</dbReference>
<dbReference type="GO" id="GO:0016730">
    <property type="term" value="F:oxidoreductase activity, acting on iron-sulfur proteins as donors"/>
    <property type="evidence" value="ECO:0007669"/>
    <property type="project" value="InterPro"/>
</dbReference>
<dbReference type="GO" id="GO:0016636">
    <property type="term" value="F:oxidoreductase activity, acting on the CH-CH group of donors, iron-sulfur protein as acceptor"/>
    <property type="evidence" value="ECO:0007669"/>
    <property type="project" value="UniProtKB-UniRule"/>
</dbReference>
<dbReference type="GO" id="GO:0036068">
    <property type="term" value="P:light-independent chlorophyll biosynthetic process"/>
    <property type="evidence" value="ECO:0007669"/>
    <property type="project" value="UniProtKB-UniRule"/>
</dbReference>
<dbReference type="GO" id="GO:0019685">
    <property type="term" value="P:photosynthesis, dark reaction"/>
    <property type="evidence" value="ECO:0007669"/>
    <property type="project" value="InterPro"/>
</dbReference>
<dbReference type="CDD" id="cd01979">
    <property type="entry name" value="Pchlide_reductase_N"/>
    <property type="match status" value="1"/>
</dbReference>
<dbReference type="Gene3D" id="3.40.50.1980">
    <property type="entry name" value="Nitrogenase molybdenum iron protein domain"/>
    <property type="match status" value="3"/>
</dbReference>
<dbReference type="HAMAP" id="MF_00352">
    <property type="entry name" value="ChlN_BchN"/>
    <property type="match status" value="1"/>
</dbReference>
<dbReference type="InterPro" id="IPR050293">
    <property type="entry name" value="LIPOR_BchN/ChlN"/>
</dbReference>
<dbReference type="InterPro" id="IPR000510">
    <property type="entry name" value="Nase/OxRdtase_comp1"/>
</dbReference>
<dbReference type="InterPro" id="IPR005970">
    <property type="entry name" value="Protochl_reductN"/>
</dbReference>
<dbReference type="NCBIfam" id="TIGR01279">
    <property type="entry name" value="DPOR_bchN"/>
    <property type="match status" value="1"/>
</dbReference>
<dbReference type="NCBIfam" id="NF002768">
    <property type="entry name" value="PRK02842.1"/>
    <property type="match status" value="1"/>
</dbReference>
<dbReference type="PANTHER" id="PTHR39429">
    <property type="entry name" value="LIGHT-INDEPENDENT PROTOCHLOROPHYLLIDE REDUCTASE SUBUNIT N"/>
    <property type="match status" value="1"/>
</dbReference>
<dbReference type="PANTHER" id="PTHR39429:SF3">
    <property type="entry name" value="LIGHT-INDEPENDENT PROTOCHLOROPHYLLIDE REDUCTASE SUBUNIT N"/>
    <property type="match status" value="1"/>
</dbReference>
<dbReference type="Pfam" id="PF00148">
    <property type="entry name" value="Oxidored_nitro"/>
    <property type="match status" value="1"/>
</dbReference>
<dbReference type="PIRSF" id="PIRSF000162">
    <property type="entry name" value="P_chlorophyll_rd"/>
    <property type="match status" value="1"/>
</dbReference>
<dbReference type="SUPFAM" id="SSF53807">
    <property type="entry name" value="Helical backbone' metal receptor"/>
    <property type="match status" value="1"/>
</dbReference>
<reference key="1">
    <citation type="submission" date="2003-06" db="EMBL/GenBank/DDBJ databases">
        <title>Cloning of LIPOR genes from Chlorella protothecoides CS-41 and their expression in E. coli BL21.</title>
        <authorList>
            <person name="Shi C."/>
            <person name="Shi X."/>
        </authorList>
    </citation>
    <scope>NUCLEOTIDE SEQUENCE [GENOMIC DNA]</scope>
    <source>
        <strain>CS-41</strain>
    </source>
</reference>
<comment type="function">
    <text evidence="1">Component of the dark-operative protochlorophyllide reductase (DPOR) that uses Mg-ATP and reduced ferredoxin to reduce ring D of protochlorophyllide (Pchlide) to form chlorophyllide a (Chlide). This reaction is light-independent. The NB-protein (ChlN-ChlB) is the catalytic component of the complex.</text>
</comment>
<comment type="catalytic activity">
    <reaction evidence="1">
        <text>chlorophyllide a + oxidized 2[4Fe-4S]-[ferredoxin] + 2 ADP + 2 phosphate = protochlorophyllide a + reduced 2[4Fe-4S]-[ferredoxin] + 2 ATP + 2 H2O</text>
        <dbReference type="Rhea" id="RHEA:28202"/>
        <dbReference type="Rhea" id="RHEA-COMP:10002"/>
        <dbReference type="Rhea" id="RHEA-COMP:10004"/>
        <dbReference type="ChEBI" id="CHEBI:15377"/>
        <dbReference type="ChEBI" id="CHEBI:30616"/>
        <dbReference type="ChEBI" id="CHEBI:33722"/>
        <dbReference type="ChEBI" id="CHEBI:33723"/>
        <dbReference type="ChEBI" id="CHEBI:43474"/>
        <dbReference type="ChEBI" id="CHEBI:83348"/>
        <dbReference type="ChEBI" id="CHEBI:83350"/>
        <dbReference type="ChEBI" id="CHEBI:456216"/>
        <dbReference type="EC" id="1.3.7.7"/>
    </reaction>
</comment>
<comment type="cofactor">
    <cofactor evidence="1">
        <name>[4Fe-4S] cluster</name>
        <dbReference type="ChEBI" id="CHEBI:49883"/>
    </cofactor>
    <text evidence="1">Binds 1 [4Fe-4S] cluster per heterodimer. The cluster is bound at the heterodimer interface by residues from both subunits.</text>
</comment>
<comment type="pathway">
    <text evidence="1">Porphyrin-containing compound metabolism; chlorophyll biosynthesis (light-independent).</text>
</comment>
<comment type="subunit">
    <text evidence="1">Protochlorophyllide reductase is composed of three subunits; ChlL, ChlN and ChlB. Forms a heterotetramer of two ChlB and two ChlN subunits.</text>
</comment>
<comment type="subcellular location">
    <subcellularLocation>
        <location>Plastid</location>
        <location>Chloroplast</location>
    </subcellularLocation>
</comment>
<comment type="similarity">
    <text evidence="1">Belongs to the BchN/ChlN family.</text>
</comment>
<protein>
    <recommendedName>
        <fullName evidence="1">Light-independent protochlorophyllide reductase subunit N</fullName>
        <shortName evidence="1">DPOR subunit N</shortName>
        <shortName evidence="1">LI-POR subunit N</shortName>
        <ecNumber evidence="1">1.3.7.7</ecNumber>
    </recommendedName>
</protein>
<keyword id="KW-0004">4Fe-4S</keyword>
<keyword id="KW-0067">ATP-binding</keyword>
<keyword id="KW-0149">Chlorophyll biosynthesis</keyword>
<keyword id="KW-0150">Chloroplast</keyword>
<keyword id="KW-0408">Iron</keyword>
<keyword id="KW-0411">Iron-sulfur</keyword>
<keyword id="KW-0479">Metal-binding</keyword>
<keyword id="KW-0547">Nucleotide-binding</keyword>
<keyword id="KW-0560">Oxidoreductase</keyword>
<keyword id="KW-0602">Photosynthesis</keyword>
<keyword id="KW-0934">Plastid</keyword>
<evidence type="ECO:0000255" key="1">
    <source>
        <dbReference type="HAMAP-Rule" id="MF_00352"/>
    </source>
</evidence>
<sequence>MTNSKLTETLTFECETGNYHTFCPISCVAWLYQKIEDSFFLVIGTKTCGYFLQNALGVMIFAEPRYAMAELEEADISAQLNDYKELKRLCLQIKQDRNPSVIVWIGTCTTEIIKMDLEGMAPRLEAEIQTPIVVARANGLDYAFTQGEDTVLAAMVQRCPSNAPEQNQIEKKSLVLFGSLPTNVATQLNLELERCGIQVAGWLPSQRYADLPVLNQNVYVCGINPFLSRTATTLMRRRKCKLISAPFPIGPDGTRAWLEKICSVFNVAPINLIERERLIWDSLEDYIALLRGKSVFFMGDNLLEISLARFLVRCGMIVYEIGIPYLDKRFQSAELQLLEKTCSEMNVAMPRIVEKPDNYNQIQRIRELQPDLAITGMAHANPLEARGINTKWSVEFTFAQIHGFTNARDILELVTRPLRRNKALENLGWNQLVKM</sequence>
<geneLocation type="chloroplast"/>